<dbReference type="EMBL" id="AAFI02000057">
    <property type="protein sequence ID" value="EAL65536.1"/>
    <property type="molecule type" value="Genomic_DNA"/>
</dbReference>
<dbReference type="RefSeq" id="XP_638907.1">
    <property type="nucleotide sequence ID" value="XM_633815.1"/>
</dbReference>
<dbReference type="FunCoup" id="Q54QG4">
    <property type="interactions" value="374"/>
</dbReference>
<dbReference type="PaxDb" id="44689-DDB0231747"/>
<dbReference type="EnsemblProtists" id="EAL65536">
    <property type="protein sequence ID" value="EAL65536"/>
    <property type="gene ID" value="DDB_G0283843"/>
</dbReference>
<dbReference type="GeneID" id="8624304"/>
<dbReference type="KEGG" id="ddi:DDB_G0283843"/>
<dbReference type="dictyBase" id="DDB_G0283843"/>
<dbReference type="VEuPathDB" id="AmoebaDB:DDB_G0283843"/>
<dbReference type="eggNOG" id="ENOG502RHU3">
    <property type="taxonomic scope" value="Eukaryota"/>
</dbReference>
<dbReference type="HOGENOM" id="CLU_1527948_0_0_1"/>
<dbReference type="InParanoid" id="Q54QG4"/>
<dbReference type="OMA" id="EYYEKEP"/>
<dbReference type="PRO" id="PR:Q54QG4"/>
<dbReference type="Proteomes" id="UP000002195">
    <property type="component" value="Chromosome 4"/>
</dbReference>
<sequence length="176" mass="20584">MASLIKEFKKLKVFLPKRMRELLIPSDEGFFDTNYRYPAPGSQTPPDITNKQFVKTRPLTRVYKFLKKRGEVLSLRKQPTLDAPTENLTAEEKAEKLFYETEPYPLTAPRIKDNKVFFHNIKAMEGFDIRNVRSINKNISKIENEFGVPIDRKVLRFEESEIDTDEPLPKSTNNLF</sequence>
<gene>
    <name type="ORF">DDB_G0283843</name>
</gene>
<protein>
    <recommendedName>
        <fullName>Uncharacterized protein DDB_G0283843</fullName>
    </recommendedName>
</protein>
<name>Y1747_DICDI</name>
<feature type="chain" id="PRO_0000350875" description="Uncharacterized protein DDB_G0283843">
    <location>
        <begin position="1"/>
        <end position="176"/>
    </location>
</feature>
<proteinExistence type="predicted"/>
<keyword id="KW-1185">Reference proteome</keyword>
<organism>
    <name type="scientific">Dictyostelium discoideum</name>
    <name type="common">Social amoeba</name>
    <dbReference type="NCBI Taxonomy" id="44689"/>
    <lineage>
        <taxon>Eukaryota</taxon>
        <taxon>Amoebozoa</taxon>
        <taxon>Evosea</taxon>
        <taxon>Eumycetozoa</taxon>
        <taxon>Dictyostelia</taxon>
        <taxon>Dictyosteliales</taxon>
        <taxon>Dictyosteliaceae</taxon>
        <taxon>Dictyostelium</taxon>
    </lineage>
</organism>
<accession>Q54QG4</accession>
<reference key="1">
    <citation type="journal article" date="2005" name="Nature">
        <title>The genome of the social amoeba Dictyostelium discoideum.</title>
        <authorList>
            <person name="Eichinger L."/>
            <person name="Pachebat J.A."/>
            <person name="Gloeckner G."/>
            <person name="Rajandream M.A."/>
            <person name="Sucgang R."/>
            <person name="Berriman M."/>
            <person name="Song J."/>
            <person name="Olsen R."/>
            <person name="Szafranski K."/>
            <person name="Xu Q."/>
            <person name="Tunggal B."/>
            <person name="Kummerfeld S."/>
            <person name="Madera M."/>
            <person name="Konfortov B.A."/>
            <person name="Rivero F."/>
            <person name="Bankier A.T."/>
            <person name="Lehmann R."/>
            <person name="Hamlin N."/>
            <person name="Davies R."/>
            <person name="Gaudet P."/>
            <person name="Fey P."/>
            <person name="Pilcher K."/>
            <person name="Chen G."/>
            <person name="Saunders D."/>
            <person name="Sodergren E.J."/>
            <person name="Davis P."/>
            <person name="Kerhornou A."/>
            <person name="Nie X."/>
            <person name="Hall N."/>
            <person name="Anjard C."/>
            <person name="Hemphill L."/>
            <person name="Bason N."/>
            <person name="Farbrother P."/>
            <person name="Desany B."/>
            <person name="Just E."/>
            <person name="Morio T."/>
            <person name="Rost R."/>
            <person name="Churcher C.M."/>
            <person name="Cooper J."/>
            <person name="Haydock S."/>
            <person name="van Driessche N."/>
            <person name="Cronin A."/>
            <person name="Goodhead I."/>
            <person name="Muzny D.M."/>
            <person name="Mourier T."/>
            <person name="Pain A."/>
            <person name="Lu M."/>
            <person name="Harper D."/>
            <person name="Lindsay R."/>
            <person name="Hauser H."/>
            <person name="James K.D."/>
            <person name="Quiles M."/>
            <person name="Madan Babu M."/>
            <person name="Saito T."/>
            <person name="Buchrieser C."/>
            <person name="Wardroper A."/>
            <person name="Felder M."/>
            <person name="Thangavelu M."/>
            <person name="Johnson D."/>
            <person name="Knights A."/>
            <person name="Loulseged H."/>
            <person name="Mungall K.L."/>
            <person name="Oliver K."/>
            <person name="Price C."/>
            <person name="Quail M.A."/>
            <person name="Urushihara H."/>
            <person name="Hernandez J."/>
            <person name="Rabbinowitsch E."/>
            <person name="Steffen D."/>
            <person name="Sanders M."/>
            <person name="Ma J."/>
            <person name="Kohara Y."/>
            <person name="Sharp S."/>
            <person name="Simmonds M.N."/>
            <person name="Spiegler S."/>
            <person name="Tivey A."/>
            <person name="Sugano S."/>
            <person name="White B."/>
            <person name="Walker D."/>
            <person name="Woodward J.R."/>
            <person name="Winckler T."/>
            <person name="Tanaka Y."/>
            <person name="Shaulsky G."/>
            <person name="Schleicher M."/>
            <person name="Weinstock G.M."/>
            <person name="Rosenthal A."/>
            <person name="Cox E.C."/>
            <person name="Chisholm R.L."/>
            <person name="Gibbs R.A."/>
            <person name="Loomis W.F."/>
            <person name="Platzer M."/>
            <person name="Kay R.R."/>
            <person name="Williams J.G."/>
            <person name="Dear P.H."/>
            <person name="Noegel A.A."/>
            <person name="Barrell B.G."/>
            <person name="Kuspa A."/>
        </authorList>
    </citation>
    <scope>NUCLEOTIDE SEQUENCE [LARGE SCALE GENOMIC DNA]</scope>
    <source>
        <strain>AX4</strain>
    </source>
</reference>